<evidence type="ECO:0000255" key="1">
    <source>
        <dbReference type="HAMAP-Rule" id="MF_01152"/>
    </source>
</evidence>
<sequence length="388" mass="43036">MAQKKDYYEILGVPRNATEEEIKRAYRRLAKQYHPDANPGNKEAEEKFKEINEAYEVLSDPEKRKLYDQFGHAAFDPKYGAQGSGGFSGGFGGGFADFDFGSFGDIFEDLFEGFDIFGTSRRRKEAPRKGADIYVDLELTLKESVFGCEKEIPIYRTEKCSVCGGSGVKPGSAPVRCQKCGGTGQIRSRQATFFGEFTTIKTCDACGGTGTIITDPCRECGGTGNVRRQRRVKINIPAGIDDGQVITLRGEGESGIKGGPNGDLHIKIKIAPHPVFKRVGQDLYIEVPITFVNAALGGEIEIPTLDGKTKVRIEPGTQNGDEVRIKGKGVPNLRSRGRGDLVVKFIVEVPKKLTEKQKELLREFERLSSEEGYEKRKHFWDRIREAFS</sequence>
<protein>
    <recommendedName>
        <fullName evidence="1">Chaperone protein DnaJ</fullName>
    </recommendedName>
</protein>
<keyword id="KW-0143">Chaperone</keyword>
<keyword id="KW-0963">Cytoplasm</keyword>
<keyword id="KW-0235">DNA replication</keyword>
<keyword id="KW-0479">Metal-binding</keyword>
<keyword id="KW-0677">Repeat</keyword>
<keyword id="KW-0346">Stress response</keyword>
<keyword id="KW-0862">Zinc</keyword>
<keyword id="KW-0863">Zinc-finger</keyword>
<comment type="function">
    <text evidence="1">Participates actively in the response to hyperosmotic and heat shock by preventing the aggregation of stress-denatured proteins and by disaggregating proteins, also in an autonomous, DnaK-independent fashion. Unfolded proteins bind initially to DnaJ; upon interaction with the DnaJ-bound protein, DnaK hydrolyzes its bound ATP, resulting in the formation of a stable complex. GrpE releases ADP from DnaK; ATP binding to DnaK triggers the release of the substrate protein, thus completing the reaction cycle. Several rounds of ATP-dependent interactions between DnaJ, DnaK and GrpE are required for fully efficient folding. Also involved, together with DnaK and GrpE, in the DNA replication of plasmids through activation of initiation proteins.</text>
</comment>
<comment type="cofactor">
    <cofactor evidence="1">
        <name>Zn(2+)</name>
        <dbReference type="ChEBI" id="CHEBI:29105"/>
    </cofactor>
    <text evidence="1">Binds 2 Zn(2+) ions per monomer.</text>
</comment>
<comment type="subunit">
    <text evidence="1">Homodimer.</text>
</comment>
<comment type="subcellular location">
    <subcellularLocation>
        <location evidence="1">Cytoplasm</location>
    </subcellularLocation>
</comment>
<comment type="domain">
    <text evidence="1">The J domain is necessary and sufficient to stimulate DnaK ATPase activity. Zinc center 1 plays an important role in the autonomous, DnaK-independent chaperone activity of DnaJ. Zinc center 2 is essential for interaction with DnaK and for DnaJ activity.</text>
</comment>
<comment type="similarity">
    <text evidence="1">Belongs to the DnaJ family.</text>
</comment>
<name>DNAJ_CALBD</name>
<accession>B9MJZ0</accession>
<reference key="1">
    <citation type="submission" date="2009-01" db="EMBL/GenBank/DDBJ databases">
        <title>Complete sequence of chromosome of Caldicellulosiruptor becscii DSM 6725.</title>
        <authorList>
            <person name="Lucas S."/>
            <person name="Copeland A."/>
            <person name="Lapidus A."/>
            <person name="Glavina del Rio T."/>
            <person name="Tice H."/>
            <person name="Bruce D."/>
            <person name="Goodwin L."/>
            <person name="Pitluck S."/>
            <person name="Sims D."/>
            <person name="Meincke L."/>
            <person name="Brettin T."/>
            <person name="Detter J.C."/>
            <person name="Han C."/>
            <person name="Larimer F."/>
            <person name="Land M."/>
            <person name="Hauser L."/>
            <person name="Kyrpides N."/>
            <person name="Ovchinnikova G."/>
            <person name="Kataeva I."/>
            <person name="Adams M.W.W."/>
        </authorList>
    </citation>
    <scope>NUCLEOTIDE SEQUENCE [LARGE SCALE GENOMIC DNA]</scope>
    <source>
        <strain>ATCC BAA-1888 / DSM 6725 / KCTC 15123 / Z-1320</strain>
    </source>
</reference>
<gene>
    <name evidence="1" type="primary">dnaJ</name>
    <name type="ordered locus">Athe_1550</name>
</gene>
<proteinExistence type="inferred from homology"/>
<dbReference type="EMBL" id="CP001393">
    <property type="protein sequence ID" value="ACM60648.1"/>
    <property type="molecule type" value="Genomic_DNA"/>
</dbReference>
<dbReference type="RefSeq" id="WP_015907995.1">
    <property type="nucleotide sequence ID" value="NC_012034.1"/>
</dbReference>
<dbReference type="SMR" id="B9MJZ0"/>
<dbReference type="STRING" id="521460.Athe_1550"/>
<dbReference type="GeneID" id="31772903"/>
<dbReference type="KEGG" id="ate:Athe_1550"/>
<dbReference type="eggNOG" id="COG0484">
    <property type="taxonomic scope" value="Bacteria"/>
</dbReference>
<dbReference type="HOGENOM" id="CLU_017633_0_7_9"/>
<dbReference type="Proteomes" id="UP000007723">
    <property type="component" value="Chromosome"/>
</dbReference>
<dbReference type="GO" id="GO:0005737">
    <property type="term" value="C:cytoplasm"/>
    <property type="evidence" value="ECO:0007669"/>
    <property type="project" value="UniProtKB-SubCell"/>
</dbReference>
<dbReference type="GO" id="GO:0005524">
    <property type="term" value="F:ATP binding"/>
    <property type="evidence" value="ECO:0007669"/>
    <property type="project" value="InterPro"/>
</dbReference>
<dbReference type="GO" id="GO:0031072">
    <property type="term" value="F:heat shock protein binding"/>
    <property type="evidence" value="ECO:0007669"/>
    <property type="project" value="InterPro"/>
</dbReference>
<dbReference type="GO" id="GO:0051082">
    <property type="term" value="F:unfolded protein binding"/>
    <property type="evidence" value="ECO:0007669"/>
    <property type="project" value="UniProtKB-UniRule"/>
</dbReference>
<dbReference type="GO" id="GO:0008270">
    <property type="term" value="F:zinc ion binding"/>
    <property type="evidence" value="ECO:0007669"/>
    <property type="project" value="UniProtKB-UniRule"/>
</dbReference>
<dbReference type="GO" id="GO:0051085">
    <property type="term" value="P:chaperone cofactor-dependent protein refolding"/>
    <property type="evidence" value="ECO:0007669"/>
    <property type="project" value="TreeGrafter"/>
</dbReference>
<dbReference type="GO" id="GO:0006260">
    <property type="term" value="P:DNA replication"/>
    <property type="evidence" value="ECO:0007669"/>
    <property type="project" value="UniProtKB-KW"/>
</dbReference>
<dbReference type="GO" id="GO:0042026">
    <property type="term" value="P:protein refolding"/>
    <property type="evidence" value="ECO:0007669"/>
    <property type="project" value="TreeGrafter"/>
</dbReference>
<dbReference type="GO" id="GO:0009408">
    <property type="term" value="P:response to heat"/>
    <property type="evidence" value="ECO:0007669"/>
    <property type="project" value="InterPro"/>
</dbReference>
<dbReference type="CDD" id="cd06257">
    <property type="entry name" value="DnaJ"/>
    <property type="match status" value="1"/>
</dbReference>
<dbReference type="CDD" id="cd10747">
    <property type="entry name" value="DnaJ_C"/>
    <property type="match status" value="1"/>
</dbReference>
<dbReference type="CDD" id="cd10719">
    <property type="entry name" value="DnaJ_zf"/>
    <property type="match status" value="1"/>
</dbReference>
<dbReference type="FunFam" id="1.10.287.110:FF:000034">
    <property type="entry name" value="Chaperone protein DnaJ"/>
    <property type="match status" value="1"/>
</dbReference>
<dbReference type="FunFam" id="2.10.230.10:FF:000002">
    <property type="entry name" value="Molecular chaperone DnaJ"/>
    <property type="match status" value="1"/>
</dbReference>
<dbReference type="FunFam" id="2.60.260.20:FF:000004">
    <property type="entry name" value="Molecular chaperone DnaJ"/>
    <property type="match status" value="1"/>
</dbReference>
<dbReference type="Gene3D" id="1.10.287.110">
    <property type="entry name" value="DnaJ domain"/>
    <property type="match status" value="1"/>
</dbReference>
<dbReference type="Gene3D" id="2.10.230.10">
    <property type="entry name" value="Heat shock protein DnaJ, cysteine-rich domain"/>
    <property type="match status" value="1"/>
</dbReference>
<dbReference type="Gene3D" id="2.60.260.20">
    <property type="entry name" value="Urease metallochaperone UreE, N-terminal domain"/>
    <property type="match status" value="2"/>
</dbReference>
<dbReference type="HAMAP" id="MF_01152">
    <property type="entry name" value="DnaJ"/>
    <property type="match status" value="1"/>
</dbReference>
<dbReference type="InterPro" id="IPR012724">
    <property type="entry name" value="DnaJ"/>
</dbReference>
<dbReference type="InterPro" id="IPR002939">
    <property type="entry name" value="DnaJ_C"/>
</dbReference>
<dbReference type="InterPro" id="IPR001623">
    <property type="entry name" value="DnaJ_domain"/>
</dbReference>
<dbReference type="InterPro" id="IPR018253">
    <property type="entry name" value="DnaJ_domain_CS"/>
</dbReference>
<dbReference type="InterPro" id="IPR008971">
    <property type="entry name" value="HSP40/DnaJ_pept-bd"/>
</dbReference>
<dbReference type="InterPro" id="IPR001305">
    <property type="entry name" value="HSP_DnaJ_Cys-rich_dom"/>
</dbReference>
<dbReference type="InterPro" id="IPR036410">
    <property type="entry name" value="HSP_DnaJ_Cys-rich_dom_sf"/>
</dbReference>
<dbReference type="InterPro" id="IPR036869">
    <property type="entry name" value="J_dom_sf"/>
</dbReference>
<dbReference type="NCBIfam" id="TIGR02349">
    <property type="entry name" value="DnaJ_bact"/>
    <property type="match status" value="1"/>
</dbReference>
<dbReference type="NCBIfam" id="NF008035">
    <property type="entry name" value="PRK10767.1"/>
    <property type="match status" value="1"/>
</dbReference>
<dbReference type="NCBIfam" id="NF010870">
    <property type="entry name" value="PRK14277.1"/>
    <property type="match status" value="1"/>
</dbReference>
<dbReference type="PANTHER" id="PTHR43096">
    <property type="entry name" value="DNAJ HOMOLOG 1, MITOCHONDRIAL-RELATED"/>
    <property type="match status" value="1"/>
</dbReference>
<dbReference type="PANTHER" id="PTHR43096:SF52">
    <property type="entry name" value="DNAJ HOMOLOG 1, MITOCHONDRIAL-RELATED"/>
    <property type="match status" value="1"/>
</dbReference>
<dbReference type="Pfam" id="PF00226">
    <property type="entry name" value="DnaJ"/>
    <property type="match status" value="1"/>
</dbReference>
<dbReference type="Pfam" id="PF01556">
    <property type="entry name" value="DnaJ_C"/>
    <property type="match status" value="1"/>
</dbReference>
<dbReference type="Pfam" id="PF00684">
    <property type="entry name" value="DnaJ_CXXCXGXG"/>
    <property type="match status" value="1"/>
</dbReference>
<dbReference type="PRINTS" id="PR00625">
    <property type="entry name" value="JDOMAIN"/>
</dbReference>
<dbReference type="SMART" id="SM00271">
    <property type="entry name" value="DnaJ"/>
    <property type="match status" value="1"/>
</dbReference>
<dbReference type="SUPFAM" id="SSF46565">
    <property type="entry name" value="Chaperone J-domain"/>
    <property type="match status" value="1"/>
</dbReference>
<dbReference type="SUPFAM" id="SSF57938">
    <property type="entry name" value="DnaJ/Hsp40 cysteine-rich domain"/>
    <property type="match status" value="1"/>
</dbReference>
<dbReference type="SUPFAM" id="SSF49493">
    <property type="entry name" value="HSP40/DnaJ peptide-binding domain"/>
    <property type="match status" value="2"/>
</dbReference>
<dbReference type="PROSITE" id="PS00636">
    <property type="entry name" value="DNAJ_1"/>
    <property type="match status" value="1"/>
</dbReference>
<dbReference type="PROSITE" id="PS50076">
    <property type="entry name" value="DNAJ_2"/>
    <property type="match status" value="1"/>
</dbReference>
<dbReference type="PROSITE" id="PS51188">
    <property type="entry name" value="ZF_CR"/>
    <property type="match status" value="1"/>
</dbReference>
<organism>
    <name type="scientific">Caldicellulosiruptor bescii (strain ATCC BAA-1888 / DSM 6725 / KCTC 15123 / Z-1320)</name>
    <name type="common">Anaerocellum thermophilum</name>
    <dbReference type="NCBI Taxonomy" id="521460"/>
    <lineage>
        <taxon>Bacteria</taxon>
        <taxon>Bacillati</taxon>
        <taxon>Bacillota</taxon>
        <taxon>Bacillota incertae sedis</taxon>
        <taxon>Caldicellulosiruptorales</taxon>
        <taxon>Caldicellulosiruptoraceae</taxon>
        <taxon>Caldicellulosiruptor</taxon>
    </lineage>
</organism>
<feature type="chain" id="PRO_1000164237" description="Chaperone protein DnaJ">
    <location>
        <begin position="1"/>
        <end position="388"/>
    </location>
</feature>
<feature type="domain" description="J" evidence="1">
    <location>
        <begin position="6"/>
        <end position="71"/>
    </location>
</feature>
<feature type="repeat" description="CXXCXGXG motif">
    <location>
        <begin position="160"/>
        <end position="167"/>
    </location>
</feature>
<feature type="repeat" description="CXXCXGXG motif">
    <location>
        <begin position="177"/>
        <end position="184"/>
    </location>
</feature>
<feature type="repeat" description="CXXCXGXG motif">
    <location>
        <begin position="203"/>
        <end position="210"/>
    </location>
</feature>
<feature type="repeat" description="CXXCXGXG motif">
    <location>
        <begin position="217"/>
        <end position="224"/>
    </location>
</feature>
<feature type="zinc finger region" description="CR-type" evidence="1">
    <location>
        <begin position="147"/>
        <end position="229"/>
    </location>
</feature>
<feature type="binding site" evidence="1">
    <location>
        <position position="160"/>
    </location>
    <ligand>
        <name>Zn(2+)</name>
        <dbReference type="ChEBI" id="CHEBI:29105"/>
        <label>1</label>
    </ligand>
</feature>
<feature type="binding site" evidence="1">
    <location>
        <position position="163"/>
    </location>
    <ligand>
        <name>Zn(2+)</name>
        <dbReference type="ChEBI" id="CHEBI:29105"/>
        <label>1</label>
    </ligand>
</feature>
<feature type="binding site" evidence="1">
    <location>
        <position position="177"/>
    </location>
    <ligand>
        <name>Zn(2+)</name>
        <dbReference type="ChEBI" id="CHEBI:29105"/>
        <label>2</label>
    </ligand>
</feature>
<feature type="binding site" evidence="1">
    <location>
        <position position="180"/>
    </location>
    <ligand>
        <name>Zn(2+)</name>
        <dbReference type="ChEBI" id="CHEBI:29105"/>
        <label>2</label>
    </ligand>
</feature>
<feature type="binding site" evidence="1">
    <location>
        <position position="203"/>
    </location>
    <ligand>
        <name>Zn(2+)</name>
        <dbReference type="ChEBI" id="CHEBI:29105"/>
        <label>2</label>
    </ligand>
</feature>
<feature type="binding site" evidence="1">
    <location>
        <position position="206"/>
    </location>
    <ligand>
        <name>Zn(2+)</name>
        <dbReference type="ChEBI" id="CHEBI:29105"/>
        <label>2</label>
    </ligand>
</feature>
<feature type="binding site" evidence="1">
    <location>
        <position position="217"/>
    </location>
    <ligand>
        <name>Zn(2+)</name>
        <dbReference type="ChEBI" id="CHEBI:29105"/>
        <label>1</label>
    </ligand>
</feature>
<feature type="binding site" evidence="1">
    <location>
        <position position="220"/>
    </location>
    <ligand>
        <name>Zn(2+)</name>
        <dbReference type="ChEBI" id="CHEBI:29105"/>
        <label>1</label>
    </ligand>
</feature>